<comment type="interaction">
    <interactant intactId="EBI-1222622">
        <id>Q96HM7</id>
    </interactant>
    <interactant intactId="EBI-945833">
        <id>Q7Z3S9</id>
        <label>NOTCH2NLA</label>
    </interactant>
    <organismsDiffer>false</organismsDiffer>
    <experiments>3</experiments>
</comment>
<comment type="interaction">
    <interactant intactId="EBI-1222622">
        <id>Q96HM7</id>
    </interactant>
    <interactant intactId="EBI-18959794">
        <id>Q96BU1</id>
        <label>S100PBP</label>
    </interactant>
    <organismsDiffer>false</organismsDiffer>
    <experiments>2</experiments>
</comment>
<comment type="similarity">
    <text evidence="2">Belongs to the PC-esterase family.</text>
</comment>
<comment type="sequence caution" evidence="2">
    <conflict type="miscellaneous discrepancy">
        <sequence resource="EMBL-CDS" id="AAH16154"/>
    </conflict>
    <text>Non-canonical splice intron-exon junction.</text>
</comment>
<keyword id="KW-1267">Proteomics identification</keyword>
<keyword id="KW-1185">Reference proteome</keyword>
<reference key="1">
    <citation type="submission" date="2005-07" db="EMBL/GenBank/DDBJ databases">
        <authorList>
            <person name="Mural R.J."/>
            <person name="Istrail S."/>
            <person name="Sutton G.G."/>
            <person name="Florea L."/>
            <person name="Halpern A.L."/>
            <person name="Mobarry C.M."/>
            <person name="Lippert R."/>
            <person name="Walenz B."/>
            <person name="Shatkay H."/>
            <person name="Dew I."/>
            <person name="Miller J.R."/>
            <person name="Flanigan M.J."/>
            <person name="Edwards N.J."/>
            <person name="Bolanos R."/>
            <person name="Fasulo D."/>
            <person name="Halldorsson B.V."/>
            <person name="Hannenhalli S."/>
            <person name="Turner R."/>
            <person name="Yooseph S."/>
            <person name="Lu F."/>
            <person name="Nusskern D.R."/>
            <person name="Shue B.C."/>
            <person name="Zheng X.H."/>
            <person name="Zhong F."/>
            <person name="Delcher A.L."/>
            <person name="Huson D.H."/>
            <person name="Kravitz S.A."/>
            <person name="Mouchard L."/>
            <person name="Reinert K."/>
            <person name="Remington K.A."/>
            <person name="Clark A.G."/>
            <person name="Waterman M.S."/>
            <person name="Eichler E.E."/>
            <person name="Adams M.D."/>
            <person name="Hunkapiller M.W."/>
            <person name="Myers E.W."/>
            <person name="Venter J.C."/>
        </authorList>
    </citation>
    <scope>NUCLEOTIDE SEQUENCE [LARGE SCALE GENOMIC DNA]</scope>
</reference>
<reference key="2">
    <citation type="journal article" date="2004" name="Genome Res.">
        <title>The status, quality, and expansion of the NIH full-length cDNA project: the Mammalian Gene Collection (MGC).</title>
        <authorList>
            <consortium name="The MGC Project Team"/>
        </authorList>
    </citation>
    <scope>NUCLEOTIDE SEQUENCE [LARGE SCALE MRNA]</scope>
    <source>
        <tissue>Lung</tissue>
        <tissue>Pancreas</tissue>
    </source>
</reference>
<name>PED1B_HUMAN</name>
<evidence type="ECO:0000256" key="1">
    <source>
        <dbReference type="SAM" id="MobiDB-lite"/>
    </source>
</evidence>
<evidence type="ECO:0000305" key="2"/>
<evidence type="ECO:0000312" key="3">
    <source>
        <dbReference type="HGNC" id="HGNC:28255"/>
    </source>
</evidence>
<proteinExistence type="evidence at protein level"/>
<protein>
    <recommendedName>
        <fullName evidence="2">PC-esterase domain-containing protein 1B</fullName>
    </recommendedName>
    <alternativeName>
        <fullName>Protein FAM113B</fullName>
    </alternativeName>
</protein>
<sequence>MILLRASEVRQLLHNKFVVILGDSVHRAVYKDLVLLLQKDRLLTPGQLRARGELNFEQDELVDGGQRGHMHNGLNYREVREFRSDHHLVRFYFLTRVYSDYLQTILKELQSGEHAPDLVIMNSCLWDISRYGPNSWRSYLENLENLFQCLGQVLPESCLLVWNTAMPVGEEVTGGFLPPKLRRQKATFLKNEVVKANFHSATEARKHNFDVLDLHFHFRHARENLHWDGVHWNGRVHRCLSQLLLAHVADAWGVELPHRHPVGEWIKKKKPGPRVEGPPQANRNHPALPLSPPLPSPTYRPLLGFPPQRLPLLPLLSPQPPPPILHHQGMPRFPQGPPDACFSSDHTFQSDQFYCHSDVPSSAHAGFFVEDNFMVGPQLPMPFFPTPRYQRPAPVVHRGFGRYRPRGPYTPWGQRPRPSKRRAPANPEPRPQ</sequence>
<dbReference type="EMBL" id="CH471111">
    <property type="protein sequence ID" value="EAW57925.1"/>
    <property type="molecule type" value="Genomic_DNA"/>
</dbReference>
<dbReference type="EMBL" id="BC008360">
    <property type="protein sequence ID" value="AAH08360.1"/>
    <property type="molecule type" value="mRNA"/>
</dbReference>
<dbReference type="EMBL" id="BC016154">
    <property type="protein sequence ID" value="AAH16154.1"/>
    <property type="status" value="ALT_SEQ"/>
    <property type="molecule type" value="mRNA"/>
</dbReference>
<dbReference type="CCDS" id="CCDS8752.1"/>
<dbReference type="RefSeq" id="NP_001268358.1">
    <property type="nucleotide sequence ID" value="NM_001281429.2"/>
</dbReference>
<dbReference type="RefSeq" id="NP_612380.1">
    <property type="nucleotide sequence ID" value="NM_138371.3"/>
</dbReference>
<dbReference type="RefSeq" id="XP_005269281.1">
    <property type="nucleotide sequence ID" value="XM_005269224.6"/>
</dbReference>
<dbReference type="RefSeq" id="XP_011537280.1">
    <property type="nucleotide sequence ID" value="XM_011538978.3"/>
</dbReference>
<dbReference type="RefSeq" id="XP_016875696.1">
    <property type="nucleotide sequence ID" value="XM_017020207.2"/>
</dbReference>
<dbReference type="RefSeq" id="XP_016875697.1">
    <property type="nucleotide sequence ID" value="XM_017020208.1"/>
</dbReference>
<dbReference type="RefSeq" id="XP_016875698.1">
    <property type="nucleotide sequence ID" value="XM_017020209.2"/>
</dbReference>
<dbReference type="RefSeq" id="XP_016875699.1">
    <property type="nucleotide sequence ID" value="XM_017020210.1"/>
</dbReference>
<dbReference type="RefSeq" id="XP_016875700.1">
    <property type="nucleotide sequence ID" value="XM_017020211.1"/>
</dbReference>
<dbReference type="RefSeq" id="XP_016875701.1">
    <property type="nucleotide sequence ID" value="XM_017020212.1"/>
</dbReference>
<dbReference type="RefSeq" id="XP_016875702.1">
    <property type="nucleotide sequence ID" value="XM_017020213.1"/>
</dbReference>
<dbReference type="RefSeq" id="XP_016875703.1">
    <property type="nucleotide sequence ID" value="XM_017020214.1"/>
</dbReference>
<dbReference type="RefSeq" id="XP_016875704.1">
    <property type="nucleotide sequence ID" value="XM_017020215.1"/>
</dbReference>
<dbReference type="RefSeq" id="XP_016875705.1">
    <property type="nucleotide sequence ID" value="XM_017020216.2"/>
</dbReference>
<dbReference type="RefSeq" id="XP_047285824.1">
    <property type="nucleotide sequence ID" value="XM_047429868.1"/>
</dbReference>
<dbReference type="RefSeq" id="XP_047285825.1">
    <property type="nucleotide sequence ID" value="XM_047429869.1"/>
</dbReference>
<dbReference type="RefSeq" id="XP_047285826.1">
    <property type="nucleotide sequence ID" value="XM_047429870.1"/>
</dbReference>
<dbReference type="RefSeq" id="XP_047285827.1">
    <property type="nucleotide sequence ID" value="XM_047429871.1"/>
</dbReference>
<dbReference type="RefSeq" id="XP_047285828.1">
    <property type="nucleotide sequence ID" value="XM_047429872.1"/>
</dbReference>
<dbReference type="RefSeq" id="XP_047285829.1">
    <property type="nucleotide sequence ID" value="XM_047429873.1"/>
</dbReference>
<dbReference type="RefSeq" id="XP_047285830.1">
    <property type="nucleotide sequence ID" value="XM_047429874.1"/>
</dbReference>
<dbReference type="RefSeq" id="XP_047285831.1">
    <property type="nucleotide sequence ID" value="XM_047429875.1"/>
</dbReference>
<dbReference type="RefSeq" id="XP_047285832.1">
    <property type="nucleotide sequence ID" value="XM_047429876.1"/>
</dbReference>
<dbReference type="RefSeq" id="XP_054229781.1">
    <property type="nucleotide sequence ID" value="XM_054373806.1"/>
</dbReference>
<dbReference type="RefSeq" id="XP_054229782.1">
    <property type="nucleotide sequence ID" value="XM_054373807.1"/>
</dbReference>
<dbReference type="RefSeq" id="XP_054229783.1">
    <property type="nucleotide sequence ID" value="XM_054373808.1"/>
</dbReference>
<dbReference type="RefSeq" id="XP_054229784.1">
    <property type="nucleotide sequence ID" value="XM_054373809.1"/>
</dbReference>
<dbReference type="RefSeq" id="XP_054229785.1">
    <property type="nucleotide sequence ID" value="XM_054373810.1"/>
</dbReference>
<dbReference type="RefSeq" id="XP_054229786.1">
    <property type="nucleotide sequence ID" value="XM_054373811.1"/>
</dbReference>
<dbReference type="RefSeq" id="XP_054229787.1">
    <property type="nucleotide sequence ID" value="XM_054373812.1"/>
</dbReference>
<dbReference type="RefSeq" id="XP_054229788.1">
    <property type="nucleotide sequence ID" value="XM_054373813.1"/>
</dbReference>
<dbReference type="RefSeq" id="XP_054229789.1">
    <property type="nucleotide sequence ID" value="XM_054373814.1"/>
</dbReference>
<dbReference type="RefSeq" id="XP_054229790.1">
    <property type="nucleotide sequence ID" value="XM_054373815.1"/>
</dbReference>
<dbReference type="RefSeq" id="XP_054229791.1">
    <property type="nucleotide sequence ID" value="XM_054373816.1"/>
</dbReference>
<dbReference type="RefSeq" id="XP_054229792.1">
    <property type="nucleotide sequence ID" value="XM_054373817.1"/>
</dbReference>
<dbReference type="RefSeq" id="XP_054229793.1">
    <property type="nucleotide sequence ID" value="XM_054373818.1"/>
</dbReference>
<dbReference type="BioGRID" id="124840">
    <property type="interactions" value="10"/>
</dbReference>
<dbReference type="FunCoup" id="Q96HM7">
    <property type="interactions" value="39"/>
</dbReference>
<dbReference type="IntAct" id="Q96HM7">
    <property type="interactions" value="6"/>
</dbReference>
<dbReference type="iPTMnet" id="Q96HM7"/>
<dbReference type="PhosphoSitePlus" id="Q96HM7"/>
<dbReference type="BioMuta" id="PCED1B"/>
<dbReference type="DMDM" id="74731954"/>
<dbReference type="jPOST" id="Q96HM7"/>
<dbReference type="MassIVE" id="Q96HM7"/>
<dbReference type="PaxDb" id="9606-ENSP00000446688"/>
<dbReference type="PeptideAtlas" id="Q96HM7"/>
<dbReference type="Antibodypedia" id="49373">
    <property type="antibodies" value="22 antibodies from 11 providers"/>
</dbReference>
<dbReference type="DNASU" id="91523"/>
<dbReference type="Ensembl" id="ENST00000432328.2">
    <property type="protein sequence ID" value="ENSP00000396040.1"/>
    <property type="gene ID" value="ENSG00000179715.13"/>
</dbReference>
<dbReference type="Ensembl" id="ENST00000546455.6">
    <property type="protein sequence ID" value="ENSP00000446688.1"/>
    <property type="gene ID" value="ENSG00000179715.13"/>
</dbReference>
<dbReference type="GeneID" id="91523"/>
<dbReference type="KEGG" id="hsa:91523"/>
<dbReference type="MANE-Select" id="ENST00000546455.6">
    <property type="protein sequence ID" value="ENSP00000446688.1"/>
    <property type="RefSeq nucleotide sequence ID" value="NM_138371.3"/>
    <property type="RefSeq protein sequence ID" value="NP_612380.1"/>
</dbReference>
<dbReference type="UCSC" id="uc001rpn.5">
    <property type="organism name" value="human"/>
</dbReference>
<dbReference type="AGR" id="HGNC:28255"/>
<dbReference type="CTD" id="91523"/>
<dbReference type="DisGeNET" id="91523"/>
<dbReference type="GeneCards" id="PCED1B"/>
<dbReference type="HGNC" id="HGNC:28255">
    <property type="gene designation" value="PCED1B"/>
</dbReference>
<dbReference type="HPA" id="ENSG00000179715">
    <property type="expression patterns" value="Tissue enhanced (adrenal gland, lymphoid tissue)"/>
</dbReference>
<dbReference type="neXtProt" id="NX_Q96HM7"/>
<dbReference type="OpenTargets" id="ENSG00000179715"/>
<dbReference type="PharmGKB" id="PA143485471"/>
<dbReference type="VEuPathDB" id="HostDB:ENSG00000179715"/>
<dbReference type="eggNOG" id="ENOG502QVBZ">
    <property type="taxonomic scope" value="Eukaryota"/>
</dbReference>
<dbReference type="GeneTree" id="ENSGT00390000002231"/>
<dbReference type="HOGENOM" id="CLU_053865_0_0_1"/>
<dbReference type="InParanoid" id="Q96HM7"/>
<dbReference type="OMA" id="YFHSDVP"/>
<dbReference type="OrthoDB" id="9975373at2759"/>
<dbReference type="PAN-GO" id="Q96HM7">
    <property type="GO annotations" value="0 GO annotations based on evolutionary models"/>
</dbReference>
<dbReference type="PhylomeDB" id="Q96HM7"/>
<dbReference type="TreeFam" id="TF328972"/>
<dbReference type="PathwayCommons" id="Q96HM7"/>
<dbReference type="SignaLink" id="Q96HM7"/>
<dbReference type="BioGRID-ORCS" id="91523">
    <property type="hits" value="51 hits in 1153 CRISPR screens"/>
</dbReference>
<dbReference type="ChiTaRS" id="PCED1B">
    <property type="organism name" value="human"/>
</dbReference>
<dbReference type="GenomeRNAi" id="91523"/>
<dbReference type="Pharos" id="Q96HM7">
    <property type="development level" value="Tdark"/>
</dbReference>
<dbReference type="PRO" id="PR:Q96HM7"/>
<dbReference type="Proteomes" id="UP000005640">
    <property type="component" value="Chromosome 12"/>
</dbReference>
<dbReference type="RNAct" id="Q96HM7">
    <property type="molecule type" value="protein"/>
</dbReference>
<dbReference type="Bgee" id="ENSG00000179715">
    <property type="expression patterns" value="Expressed in granulocyte and 112 other cell types or tissues"/>
</dbReference>
<dbReference type="ExpressionAtlas" id="Q96HM7">
    <property type="expression patterns" value="baseline and differential"/>
</dbReference>
<dbReference type="Gene3D" id="3.40.50.1110">
    <property type="entry name" value="SGNH hydrolase"/>
    <property type="match status" value="1"/>
</dbReference>
<dbReference type="InterPro" id="IPR036514">
    <property type="entry name" value="SGNH_hydro_sf"/>
</dbReference>
<dbReference type="PANTHER" id="PTHR14469:SF1">
    <property type="entry name" value="PC-ESTERASE DOMAIN-CONTAINING PROTEIN 1B"/>
    <property type="match status" value="1"/>
</dbReference>
<dbReference type="PANTHER" id="PTHR14469">
    <property type="entry name" value="SARCOMA ANTIGEN NY-SAR-23"/>
    <property type="match status" value="1"/>
</dbReference>
<dbReference type="SUPFAM" id="SSF52266">
    <property type="entry name" value="SGNH hydrolase"/>
    <property type="match status" value="1"/>
</dbReference>
<gene>
    <name evidence="3" type="primary">PCED1B</name>
    <name type="synonym">FAM113B</name>
</gene>
<organism>
    <name type="scientific">Homo sapiens</name>
    <name type="common">Human</name>
    <dbReference type="NCBI Taxonomy" id="9606"/>
    <lineage>
        <taxon>Eukaryota</taxon>
        <taxon>Metazoa</taxon>
        <taxon>Chordata</taxon>
        <taxon>Craniata</taxon>
        <taxon>Vertebrata</taxon>
        <taxon>Euteleostomi</taxon>
        <taxon>Mammalia</taxon>
        <taxon>Eutheria</taxon>
        <taxon>Euarchontoglires</taxon>
        <taxon>Primates</taxon>
        <taxon>Haplorrhini</taxon>
        <taxon>Catarrhini</taxon>
        <taxon>Hominidae</taxon>
        <taxon>Homo</taxon>
    </lineage>
</organism>
<feature type="chain" id="PRO_0000331356" description="PC-esterase domain-containing protein 1B">
    <location>
        <begin position="1"/>
        <end position="432"/>
    </location>
</feature>
<feature type="region of interest" description="Disordered" evidence="1">
    <location>
        <begin position="264"/>
        <end position="293"/>
    </location>
</feature>
<feature type="region of interest" description="Disordered" evidence="1">
    <location>
        <begin position="398"/>
        <end position="432"/>
    </location>
</feature>
<feature type="sequence variant" id="VAR_042761" description="In dbSNP:rs2543737.">
    <original>P</original>
    <variation>A</variation>
    <location>
        <position position="429"/>
    </location>
</feature>
<accession>Q96HM7</accession>
<accession>Q96B20</accession>